<comment type="function">
    <text evidence="1">Sodium-phosphate symporter which preferentially transports the monovalent form of phosphate with a stoichiometry of two sodium ions per phosphate ion. Plays a critical role in the determination of bone quality and strength by providing phosphate for bone mineralization. Required to maintain normal cerebrospinal fluid phosphate levels. Mediates phosphate-induced calcification of vascular smooth muscle cells (VCMCs) and can functionally compensate for loss of SLC20A1 in VCMCs (By similarity).</text>
</comment>
<comment type="function">
    <text evidence="5 6">(Microbial infection) Functions as a retroviral receptor and confers hamster cells susceptibility to infection to Gibbon Ape Leukemia Virus (GaLV) and amphotropic murine leukemia virus (A-MuLV).</text>
</comment>
<comment type="catalytic activity">
    <reaction evidence="1">
        <text>2 Na(+)(out) + phosphate(out) = 2 Na(+)(in) + phosphate(in)</text>
        <dbReference type="Rhea" id="RHEA:71259"/>
        <dbReference type="ChEBI" id="CHEBI:29101"/>
        <dbReference type="ChEBI" id="CHEBI:43474"/>
    </reaction>
</comment>
<comment type="subunit">
    <text evidence="1">Homodimer.</text>
</comment>
<comment type="subcellular location">
    <subcellularLocation>
        <location evidence="2">Cell membrane</location>
        <topology evidence="3">Multi-pass membrane protein</topology>
    </subcellularLocation>
    <subcellularLocation>
        <location evidence="2">Apical cell membrane</location>
        <topology evidence="3">Multi-pass membrane protein</topology>
    </subcellularLocation>
</comment>
<comment type="similarity">
    <text evidence="7">Belongs to the inorganic phosphate transporter (PiT) (TC 2.A.20) family.</text>
</comment>
<evidence type="ECO:0000250" key="1">
    <source>
        <dbReference type="UniProtKB" id="Q08357"/>
    </source>
</evidence>
<evidence type="ECO:0000250" key="2">
    <source>
        <dbReference type="UniProtKB" id="Q63488"/>
    </source>
</evidence>
<evidence type="ECO:0000255" key="3"/>
<evidence type="ECO:0000256" key="4">
    <source>
        <dbReference type="SAM" id="MobiDB-lite"/>
    </source>
</evidence>
<evidence type="ECO:0000269" key="5">
    <source>
    </source>
</evidence>
<evidence type="ECO:0000269" key="6">
    <source>
    </source>
</evidence>
<evidence type="ECO:0000305" key="7"/>
<organism>
    <name type="scientific">Cricetulus griseus</name>
    <name type="common">Chinese hamster</name>
    <name type="synonym">Cricetulus barabensis griseus</name>
    <dbReference type="NCBI Taxonomy" id="10029"/>
    <lineage>
        <taxon>Eukaryota</taxon>
        <taxon>Metazoa</taxon>
        <taxon>Chordata</taxon>
        <taxon>Craniata</taxon>
        <taxon>Vertebrata</taxon>
        <taxon>Euteleostomi</taxon>
        <taxon>Mammalia</taxon>
        <taxon>Eutheria</taxon>
        <taxon>Euarchontoglires</taxon>
        <taxon>Glires</taxon>
        <taxon>Rodentia</taxon>
        <taxon>Myomorpha</taxon>
        <taxon>Muroidea</taxon>
        <taxon>Cricetidae</taxon>
        <taxon>Cricetinae</taxon>
        <taxon>Cricetulus</taxon>
    </lineage>
</organism>
<sequence>MAMDGYLWMVILGFIIAFILAFSVGANDVANSFGTAVGSGVVTLRQACILASIFETTGSVLLGAKVGETIRKGIIDVNLYNDTVVTLMAGEVSAMVGSAVWQLIASFLRLPISGTHCIVGSTIGFSLVANGTKGVQWMELVKIVASWFISPLLSGFMSGVLFVLIRMFILTKEDPVPNGLQALPLFYAATIAINVFSIMYTGAPVLGLSLPIWAIALISFGVALLFAFFVWLFVCPWMRRKIAGKLEKESALSRTSDESLSKVQEVESPFKELPGAKASDDSAVPLTNPTGEAVGPSEGTSTGNHPRTAYGRALSMTHGSAKSPISNGTFSFEGHMRNDGHVYHTVHKDSGLYKDLLHKIHVDKGPEEKLSQENNYRLLRRNNSYTCYTAAICGMPVHTTFRATDASSAPEDSEKLVGDTVSYSKKRLRYDSYSSYCNAVAEAEIEAEEGGVEMRLASELADPDQPHDDPTEEEKEEKDTAEVHLLFHFLQVLTACFGSFAHGGNDVSNAIGPLVALWLIYEQGGVMQEAATPVWLLFYGGVGICTGLWVWGRRVIQTMGKDLTPITPSSGFTIELASAFTVVIASNIGLPVSTTHCKVGSVVAVGWIRSRKAVDWHLFRNIFVAWFVTVPVAGLFSAAIMAIFMYGILS</sequence>
<dbReference type="EMBL" id="U13945">
    <property type="protein sequence ID" value="AAA57032.1"/>
    <property type="molecule type" value="mRNA"/>
</dbReference>
<dbReference type="EMBL" id="AF063025">
    <property type="protein sequence ID" value="AAD28693.1"/>
    <property type="molecule type" value="mRNA"/>
</dbReference>
<dbReference type="EMBL" id="AF239675">
    <property type="protein sequence ID" value="AAG21945.1"/>
    <property type="molecule type" value="mRNA"/>
</dbReference>
<dbReference type="RefSeq" id="NP_001230939.1">
    <property type="nucleotide sequence ID" value="NM_001244010.1"/>
</dbReference>
<dbReference type="SMR" id="Q9ES44"/>
<dbReference type="GlyCosmos" id="Q9ES44">
    <property type="glycosylation" value="1 site, No reported glycans"/>
</dbReference>
<dbReference type="PaxDb" id="10029-NP_001230939.1"/>
<dbReference type="GeneID" id="100689023"/>
<dbReference type="KEGG" id="cge:100689023"/>
<dbReference type="CTD" id="6575"/>
<dbReference type="eggNOG" id="KOG2493">
    <property type="taxonomic scope" value="Eukaryota"/>
</dbReference>
<dbReference type="OrthoDB" id="260807at2759"/>
<dbReference type="Proteomes" id="UP000694386">
    <property type="component" value="Unplaced"/>
</dbReference>
<dbReference type="Proteomes" id="UP001108280">
    <property type="component" value="Chromosome 1"/>
</dbReference>
<dbReference type="GO" id="GO:0016324">
    <property type="term" value="C:apical plasma membrane"/>
    <property type="evidence" value="ECO:0000250"/>
    <property type="project" value="UniProtKB"/>
</dbReference>
<dbReference type="GO" id="GO:0031526">
    <property type="term" value="C:brush border membrane"/>
    <property type="evidence" value="ECO:0000250"/>
    <property type="project" value="UniProtKB"/>
</dbReference>
<dbReference type="GO" id="GO:0005886">
    <property type="term" value="C:plasma membrane"/>
    <property type="evidence" value="ECO:0000250"/>
    <property type="project" value="UniProtKB"/>
</dbReference>
<dbReference type="GO" id="GO:0005436">
    <property type="term" value="F:sodium:phosphate symporter activity"/>
    <property type="evidence" value="ECO:0000250"/>
    <property type="project" value="UniProtKB"/>
</dbReference>
<dbReference type="GO" id="GO:0001618">
    <property type="term" value="F:virus receptor activity"/>
    <property type="evidence" value="ECO:0007669"/>
    <property type="project" value="UniProtKB-KW"/>
</dbReference>
<dbReference type="GO" id="GO:0035435">
    <property type="term" value="P:phosphate ion transmembrane transport"/>
    <property type="evidence" value="ECO:0007669"/>
    <property type="project" value="TreeGrafter"/>
</dbReference>
<dbReference type="GO" id="GO:0030501">
    <property type="term" value="P:positive regulation of bone mineralization"/>
    <property type="evidence" value="ECO:0000250"/>
    <property type="project" value="UniProtKB"/>
</dbReference>
<dbReference type="InterPro" id="IPR001204">
    <property type="entry name" value="Phos_transporter"/>
</dbReference>
<dbReference type="PANTHER" id="PTHR11101">
    <property type="entry name" value="PHOSPHATE TRANSPORTER"/>
    <property type="match status" value="1"/>
</dbReference>
<dbReference type="PANTHER" id="PTHR11101:SF83">
    <property type="entry name" value="SODIUM-DEPENDENT PHOSPHATE TRANSPORTER 2"/>
    <property type="match status" value="1"/>
</dbReference>
<dbReference type="Pfam" id="PF01384">
    <property type="entry name" value="PHO4"/>
    <property type="match status" value="1"/>
</dbReference>
<feature type="chain" id="PRO_0000341266" description="Sodium-dependent phosphate transporter 2">
    <location>
        <begin position="1"/>
        <end position="650"/>
    </location>
</feature>
<feature type="topological domain" description="Extracellular" evidence="3">
    <location>
        <begin position="1"/>
        <end position="5"/>
    </location>
</feature>
<feature type="transmembrane region" description="Helical" evidence="3">
    <location>
        <begin position="6"/>
        <end position="26"/>
    </location>
</feature>
<feature type="topological domain" description="Cytoplasmic" evidence="3">
    <location>
        <begin position="27"/>
        <end position="46"/>
    </location>
</feature>
<feature type="transmembrane region" description="Helical" evidence="3">
    <location>
        <begin position="47"/>
        <end position="67"/>
    </location>
</feature>
<feature type="topological domain" description="Extracellular" evidence="3">
    <location>
        <begin position="68"/>
        <end position="83"/>
    </location>
</feature>
<feature type="transmembrane region" description="Helical" evidence="3">
    <location>
        <begin position="84"/>
        <end position="104"/>
    </location>
</feature>
<feature type="topological domain" description="Cytoplasmic" evidence="3">
    <location>
        <begin position="105"/>
        <end position="109"/>
    </location>
</feature>
<feature type="transmembrane region" description="Helical" evidence="3">
    <location>
        <begin position="110"/>
        <end position="130"/>
    </location>
</feature>
<feature type="topological domain" description="Extracellular" evidence="3">
    <location>
        <begin position="131"/>
        <end position="142"/>
    </location>
</feature>
<feature type="transmembrane region" description="Helical" evidence="3">
    <location>
        <begin position="143"/>
        <end position="163"/>
    </location>
</feature>
<feature type="topological domain" description="Cytoplasmic" evidence="3">
    <location>
        <begin position="164"/>
        <end position="192"/>
    </location>
</feature>
<feature type="transmembrane region" description="Helical" evidence="3">
    <location>
        <begin position="193"/>
        <end position="212"/>
    </location>
</feature>
<feature type="topological domain" description="Extracellular" evidence="3">
    <location>
        <position position="213"/>
    </location>
</feature>
<feature type="transmembrane region" description="Helical" evidence="3">
    <location>
        <begin position="214"/>
        <end position="234"/>
    </location>
</feature>
<feature type="topological domain" description="Cytoplasmic" evidence="3">
    <location>
        <begin position="235"/>
        <end position="482"/>
    </location>
</feature>
<feature type="transmembrane region" description="Helical" evidence="3">
    <location>
        <begin position="483"/>
        <end position="503"/>
    </location>
</feature>
<feature type="topological domain" description="Extracellular" evidence="3">
    <location>
        <begin position="504"/>
        <end position="530"/>
    </location>
</feature>
<feature type="transmembrane region" description="Helical" evidence="3">
    <location>
        <begin position="531"/>
        <end position="551"/>
    </location>
</feature>
<feature type="topological domain" description="Cytoplasmic" evidence="3">
    <location>
        <begin position="552"/>
        <end position="571"/>
    </location>
</feature>
<feature type="transmembrane region" description="Helical" evidence="3">
    <location>
        <begin position="572"/>
        <end position="586"/>
    </location>
</feature>
<feature type="topological domain" description="Extracellular" evidence="3">
    <location>
        <begin position="587"/>
        <end position="593"/>
    </location>
</feature>
<feature type="transmembrane region" description="Helical" evidence="3">
    <location>
        <begin position="594"/>
        <end position="609"/>
    </location>
</feature>
<feature type="topological domain" description="Cytoplasmic" evidence="3">
    <location>
        <begin position="610"/>
        <end position="621"/>
    </location>
</feature>
<feature type="transmembrane region" description="Helical" evidence="3">
    <location>
        <begin position="622"/>
        <end position="642"/>
    </location>
</feature>
<feature type="topological domain" description="Extracellular" evidence="3">
    <location>
        <begin position="643"/>
        <end position="650"/>
    </location>
</feature>
<feature type="region of interest" description="Disordered" evidence="4">
    <location>
        <begin position="268"/>
        <end position="310"/>
    </location>
</feature>
<feature type="modified residue" description="Phosphoserine" evidence="2">
    <location>
        <position position="253"/>
    </location>
</feature>
<feature type="modified residue" description="Phosphoserine" evidence="1">
    <location>
        <position position="256"/>
    </location>
</feature>
<feature type="modified residue" description="Phosphoserine" evidence="1">
    <location>
        <position position="259"/>
    </location>
</feature>
<feature type="modified residue" description="Phosphoserine" evidence="1">
    <location>
        <position position="268"/>
    </location>
</feature>
<feature type="modified residue" description="Phosphoserine" evidence="1">
    <location>
        <position position="315"/>
    </location>
</feature>
<feature type="modified residue" description="Phosphoserine" evidence="1">
    <location>
        <position position="384"/>
    </location>
</feature>
<feature type="glycosylation site" description="N-linked (GlcNAc...) asparagine" evidence="3">
    <location>
        <position position="81"/>
    </location>
</feature>
<feature type="sequence conflict" description="In Ref. 2; AAD28693." evidence="7" ref="2">
    <location>
        <begin position="1"/>
        <end position="2"/>
    </location>
</feature>
<feature type="sequence conflict" description="In Ref. 1; AAA57032." evidence="7" ref="1">
    <original>G</original>
    <variation>E</variation>
    <location>
        <position position="5"/>
    </location>
</feature>
<feature type="sequence conflict" description="In Ref. 3; AAG21945." evidence="7" ref="3">
    <original>V</original>
    <variation>L</variation>
    <location>
        <position position="66"/>
    </location>
</feature>
<feature type="sequence conflict" description="In Ref. 3; AAG21945." evidence="7" ref="3">
    <original>W</original>
    <variation>G</variation>
    <location>
        <position position="101"/>
    </location>
</feature>
<feature type="sequence conflict" description="In Ref. 2; AAD28693." evidence="7" ref="2">
    <original>K</original>
    <variation>M</variation>
    <location>
        <position position="271"/>
    </location>
</feature>
<feature type="sequence conflict" description="In Ref. 1; AAA57032." evidence="7" ref="1">
    <original>KL</original>
    <variation>NV</variation>
    <location>
        <begin position="415"/>
        <end position="416"/>
    </location>
</feature>
<feature type="sequence conflict" description="In Ref. 1; AAA57032." evidence="7" ref="1">
    <original>S</original>
    <variation>F</variation>
    <location>
        <position position="424"/>
    </location>
</feature>
<feature type="sequence conflict" description="In Ref. 3; AAG21945." evidence="7" ref="3">
    <original>R</original>
    <variation>K</variation>
    <location>
        <position position="455"/>
    </location>
</feature>
<feature type="sequence conflict" description="In Ref. 1; AAA57032." evidence="7" ref="1">
    <original>A</original>
    <variation>Q</variation>
    <location>
        <position position="481"/>
    </location>
</feature>
<feature type="sequence conflict" description="In Ref. 1; AAA57032." evidence="7" ref="1">
    <original>A</original>
    <variation>S</variation>
    <location>
        <position position="501"/>
    </location>
</feature>
<feature type="sequence conflict" description="In Ref. 1; AAA57032." evidence="7" ref="1">
    <original>G</original>
    <variation>R</variation>
    <location>
        <position position="634"/>
    </location>
</feature>
<feature type="sequence conflict" description="In Ref. 1; AAA57032." evidence="7" ref="1">
    <original>S</original>
    <variation>PYV</variation>
    <location>
        <position position="650"/>
    </location>
</feature>
<accession>Q9ES44</accession>
<accession>Q60421</accession>
<accession>Q9WTV3</accession>
<reference key="1">
    <citation type="journal article" date="1994" name="J. Virol.">
        <title>Properties of a unique form of the murine amphotropic leukemia virus receptor expressed on hamster cells.</title>
        <authorList>
            <person name="Wilson C.A."/>
            <person name="Farrell K.B."/>
            <person name="Eiden M.V."/>
        </authorList>
    </citation>
    <scope>NUCLEOTIDE SEQUENCE [MRNA]</scope>
    <scope>FUNCTION AS RETROVIRAL RECEPTOR (MICROBIAL FUNCTION)</scope>
    <source>
        <tissue>Lung</tissue>
    </source>
</reference>
<reference key="2">
    <citation type="journal article" date="1999" name="J. Virol.">
        <title>Gibbon ape leukemia virus receptor functions of type III phosphate transporters from CHOK1 cells are disrupted by two distinct mechanisms.</title>
        <authorList>
            <person name="Chaudry G.J."/>
            <person name="Farrell K.B."/>
            <person name="Ting Y.-T."/>
            <person name="Schmitz C."/>
            <person name="Lie S.Y."/>
            <person name="Petropoulos C.J."/>
            <person name="Eiden M.V."/>
        </authorList>
    </citation>
    <scope>NUCLEOTIDE SEQUENCE [MRNA]</scope>
</reference>
<reference key="3">
    <citation type="journal article" date="2000" name="J. Virol.">
        <title>Cellular and species resistance to murine amphotropic, gibbon ape, and feline subgroup C leukemia viruses is strongly influenced by receptor expression levels and by receptor masking mechanisms.</title>
        <authorList>
            <person name="Tailor C.S."/>
            <person name="Nouri A."/>
            <person name="Kabat D."/>
        </authorList>
    </citation>
    <scope>NUCLEOTIDE SEQUENCE [MRNA]</scope>
    <scope>FUNCTION AS RETROVIRAL RECEPTOR (MICROBIAL FUNCTION)</scope>
    <source>
        <tissue>Ovary</tissue>
    </source>
</reference>
<protein>
    <recommendedName>
        <fullName>Sodium-dependent phosphate transporter 2</fullName>
    </recommendedName>
    <alternativeName>
        <fullName>Amphotropic murine leukemia virus receptor</fullName>
    </alternativeName>
    <alternativeName>
        <fullName>Amphotropic murine retrovirus receptor</fullName>
    </alternativeName>
    <alternativeName>
        <fullName>Phosphate transporter 2</fullName>
        <shortName>ChoPit2</shortName>
        <shortName>HaPit2</shortName>
        <shortName>PiT-2</shortName>
    </alternativeName>
    <alternativeName>
        <fullName>Solute carrier family 20 member 2</fullName>
    </alternativeName>
</protein>
<gene>
    <name type="primary">SLC20A2</name>
    <name type="synonym">PIT2</name>
</gene>
<keyword id="KW-1003">Cell membrane</keyword>
<keyword id="KW-0325">Glycoprotein</keyword>
<keyword id="KW-1183">Host cell receptor for virus entry</keyword>
<keyword id="KW-0945">Host-virus interaction</keyword>
<keyword id="KW-0406">Ion transport</keyword>
<keyword id="KW-0472">Membrane</keyword>
<keyword id="KW-0592">Phosphate transport</keyword>
<keyword id="KW-0597">Phosphoprotein</keyword>
<keyword id="KW-0675">Receptor</keyword>
<keyword id="KW-0915">Sodium</keyword>
<keyword id="KW-0739">Sodium transport</keyword>
<keyword id="KW-0769">Symport</keyword>
<keyword id="KW-0812">Transmembrane</keyword>
<keyword id="KW-1133">Transmembrane helix</keyword>
<keyword id="KW-0813">Transport</keyword>
<name>S20A2_CRIGR</name>
<proteinExistence type="evidence at protein level"/>